<organism>
    <name type="scientific">Haemophilus influenzae (strain ATCC 51907 / DSM 11121 / KW20 / Rd)</name>
    <dbReference type="NCBI Taxonomy" id="71421"/>
    <lineage>
        <taxon>Bacteria</taxon>
        <taxon>Pseudomonadati</taxon>
        <taxon>Pseudomonadota</taxon>
        <taxon>Gammaproteobacteria</taxon>
        <taxon>Pasteurellales</taxon>
        <taxon>Pasteurellaceae</taxon>
        <taxon>Haemophilus</taxon>
    </lineage>
</organism>
<protein>
    <recommendedName>
        <fullName>Aminopeptidase N</fullName>
        <ecNumber>3.4.11.2</ecNumber>
    </recommendedName>
    <alternativeName>
        <fullName>Alpha-aminoacylpeptide hydrolase</fullName>
    </alternativeName>
</protein>
<comment type="function">
    <text evidence="1">Aminopeptidase N is involved in the degradation of intracellular peptides generated by protein breakdown during normal growth as well as in response to nutrient starvation.</text>
</comment>
<comment type="catalytic activity">
    <reaction>
        <text>Release of an N-terminal amino acid, Xaa-|-Yaa- from a peptide, amide or arylamide. Xaa is preferably Ala, but may be most amino acids including Pro (slow action). When a terminal hydrophobic residue is followed by a prolyl residue, the two may be released as an intact Xaa-Pro dipeptide.</text>
        <dbReference type="EC" id="3.4.11.2"/>
    </reaction>
</comment>
<comment type="cofactor">
    <cofactor evidence="1">
        <name>Zn(2+)</name>
        <dbReference type="ChEBI" id="CHEBI:29105"/>
    </cofactor>
    <text evidence="1">Binds 1 zinc ion per subunit.</text>
</comment>
<comment type="subcellular location">
    <subcellularLocation>
        <location evidence="1">Cell inner membrane</location>
        <topology evidence="1">Peripheral membrane protein</topology>
        <orientation evidence="1">Cytoplasmic side</orientation>
    </subcellularLocation>
</comment>
<comment type="similarity">
    <text evidence="3">Belongs to the peptidase M1 family.</text>
</comment>
<name>AMPN_HAEIN</name>
<accession>P45274</accession>
<reference key="1">
    <citation type="journal article" date="1995" name="Science">
        <title>Whole-genome random sequencing and assembly of Haemophilus influenzae Rd.</title>
        <authorList>
            <person name="Fleischmann R.D."/>
            <person name="Adams M.D."/>
            <person name="White O."/>
            <person name="Clayton R.A."/>
            <person name="Kirkness E.F."/>
            <person name="Kerlavage A.R."/>
            <person name="Bult C.J."/>
            <person name="Tomb J.-F."/>
            <person name="Dougherty B.A."/>
            <person name="Merrick J.M."/>
            <person name="McKenney K."/>
            <person name="Sutton G.G."/>
            <person name="FitzHugh W."/>
            <person name="Fields C.A."/>
            <person name="Gocayne J.D."/>
            <person name="Scott J.D."/>
            <person name="Shirley R."/>
            <person name="Liu L.-I."/>
            <person name="Glodek A."/>
            <person name="Kelley J.M."/>
            <person name="Weidman J.F."/>
            <person name="Phillips C.A."/>
            <person name="Spriggs T."/>
            <person name="Hedblom E."/>
            <person name="Cotton M.D."/>
            <person name="Utterback T.R."/>
            <person name="Hanna M.C."/>
            <person name="Nguyen D.T."/>
            <person name="Saudek D.M."/>
            <person name="Brandon R.C."/>
            <person name="Fine L.D."/>
            <person name="Fritchman J.L."/>
            <person name="Fuhrmann J.L."/>
            <person name="Geoghagen N.S.M."/>
            <person name="Gnehm C.L."/>
            <person name="McDonald L.A."/>
            <person name="Small K.V."/>
            <person name="Fraser C.M."/>
            <person name="Smith H.O."/>
            <person name="Venter J.C."/>
        </authorList>
    </citation>
    <scope>NUCLEOTIDE SEQUENCE [LARGE SCALE GENOMIC DNA]</scope>
    <source>
        <strain>ATCC 51907 / DSM 11121 / KW20 / Rd</strain>
    </source>
</reference>
<reference key="2">
    <citation type="journal article" date="1994" name="Infect. Immun.">
        <title>Identification of hifD and hifE in the pilus gene cluster of Haemophilus influenzae type b strain Eagan.</title>
        <authorList>
            <person name="McCrea K.W."/>
            <person name="Watson W.J."/>
            <person name="Gilsdorf J.R."/>
            <person name="Marrs C.F."/>
        </authorList>
    </citation>
    <scope>NUCLEOTIDE SEQUENCE [GENOMIC DNA] OF 1-129</scope>
    <source>
        <strain>Eagan / Serotype B</strain>
    </source>
</reference>
<reference key="3">
    <citation type="journal article" date="1994" name="Mol. Microbiol.">
        <title>The fimbrial gene cluster of Haemophilus influenzae type b.</title>
        <authorList>
            <person name="van Ham M.S."/>
            <person name="van Alphen L."/>
            <person name="Mooi F.R."/>
            <person name="van Putten J.P.M."/>
        </authorList>
    </citation>
    <scope>NUCLEOTIDE SEQUENCE [GENOMIC DNA] OF 1-28</scope>
    <source>
        <strain>AM30 (770235) / Serotype B</strain>
    </source>
</reference>
<proteinExistence type="inferred from homology"/>
<dbReference type="EC" id="3.4.11.2"/>
<dbReference type="EMBL" id="L42023">
    <property type="protein sequence ID" value="AAC23262.1"/>
    <property type="molecule type" value="Genomic_DNA"/>
</dbReference>
<dbReference type="EMBL" id="Z33502">
    <property type="protein sequence ID" value="CAA83910.1"/>
    <property type="molecule type" value="Genomic_DNA"/>
</dbReference>
<dbReference type="EMBL" id="U58657">
    <property type="protein sequence ID" value="AAB70877.1"/>
    <property type="molecule type" value="Genomic_DNA"/>
</dbReference>
<dbReference type="PIR" id="F64132">
    <property type="entry name" value="F64132"/>
</dbReference>
<dbReference type="RefSeq" id="NP_439756.1">
    <property type="nucleotide sequence ID" value="NC_000907.1"/>
</dbReference>
<dbReference type="SMR" id="P45274"/>
<dbReference type="STRING" id="71421.HI_1614"/>
<dbReference type="MEROPS" id="M01.005"/>
<dbReference type="EnsemblBacteria" id="AAC23262">
    <property type="protein sequence ID" value="AAC23262"/>
    <property type="gene ID" value="HI_1614"/>
</dbReference>
<dbReference type="KEGG" id="hin:HI_1614"/>
<dbReference type="PATRIC" id="fig|71421.8.peg.1687"/>
<dbReference type="eggNOG" id="COG0308">
    <property type="taxonomic scope" value="Bacteria"/>
</dbReference>
<dbReference type="HOGENOM" id="CLU_007993_2_0_6"/>
<dbReference type="OrthoDB" id="100605at2"/>
<dbReference type="PhylomeDB" id="P45274"/>
<dbReference type="BioCyc" id="HINF71421:G1GJ1-1627-MONOMER"/>
<dbReference type="Proteomes" id="UP000000579">
    <property type="component" value="Chromosome"/>
</dbReference>
<dbReference type="GO" id="GO:0005886">
    <property type="term" value="C:plasma membrane"/>
    <property type="evidence" value="ECO:0007669"/>
    <property type="project" value="UniProtKB-SubCell"/>
</dbReference>
<dbReference type="GO" id="GO:0016285">
    <property type="term" value="F:alanyl aminopeptidase activity"/>
    <property type="evidence" value="ECO:0007669"/>
    <property type="project" value="UniProtKB-EC"/>
</dbReference>
<dbReference type="GO" id="GO:0008237">
    <property type="term" value="F:metallopeptidase activity"/>
    <property type="evidence" value="ECO:0007669"/>
    <property type="project" value="UniProtKB-KW"/>
</dbReference>
<dbReference type="GO" id="GO:0008270">
    <property type="term" value="F:zinc ion binding"/>
    <property type="evidence" value="ECO:0007669"/>
    <property type="project" value="InterPro"/>
</dbReference>
<dbReference type="GO" id="GO:0006508">
    <property type="term" value="P:proteolysis"/>
    <property type="evidence" value="ECO:0007669"/>
    <property type="project" value="UniProtKB-KW"/>
</dbReference>
<dbReference type="CDD" id="cd09600">
    <property type="entry name" value="M1_APN"/>
    <property type="match status" value="1"/>
</dbReference>
<dbReference type="FunFam" id="1.10.390.10:FF:000002">
    <property type="entry name" value="Aminopeptidase N"/>
    <property type="match status" value="1"/>
</dbReference>
<dbReference type="FunFam" id="1.25.50.10:FF:000001">
    <property type="entry name" value="Aminopeptidase N"/>
    <property type="match status" value="1"/>
</dbReference>
<dbReference type="FunFam" id="2.60.40.1730:FF:000005">
    <property type="entry name" value="Aminopeptidase N"/>
    <property type="match status" value="1"/>
</dbReference>
<dbReference type="FunFam" id="2.60.40.1840:FF:000001">
    <property type="entry name" value="Aminopeptidase N"/>
    <property type="match status" value="1"/>
</dbReference>
<dbReference type="FunFam" id="3.30.2010.30:FF:000002">
    <property type="entry name" value="Putative aminopeptidase N"/>
    <property type="match status" value="1"/>
</dbReference>
<dbReference type="Gene3D" id="2.60.40.1840">
    <property type="match status" value="1"/>
</dbReference>
<dbReference type="Gene3D" id="3.30.2010.30">
    <property type="match status" value="1"/>
</dbReference>
<dbReference type="Gene3D" id="1.10.390.10">
    <property type="entry name" value="Neutral Protease Domain 2"/>
    <property type="match status" value="1"/>
</dbReference>
<dbReference type="Gene3D" id="1.25.50.10">
    <property type="entry name" value="Peptidase M1, alanyl aminopeptidase, C-terminal domain"/>
    <property type="match status" value="1"/>
</dbReference>
<dbReference type="Gene3D" id="2.60.40.1730">
    <property type="entry name" value="tricorn interacting facor f3 domain"/>
    <property type="match status" value="1"/>
</dbReference>
<dbReference type="InterPro" id="IPR045357">
    <property type="entry name" value="Aminopeptidase_N-like_N"/>
</dbReference>
<dbReference type="InterPro" id="IPR042097">
    <property type="entry name" value="Aminopeptidase_N-like_N_sf"/>
</dbReference>
<dbReference type="InterPro" id="IPR038438">
    <property type="entry name" value="PepN_Ig-like_sf"/>
</dbReference>
<dbReference type="InterPro" id="IPR001930">
    <property type="entry name" value="Peptidase_M1"/>
</dbReference>
<dbReference type="InterPro" id="IPR014782">
    <property type="entry name" value="Peptidase_M1_dom"/>
</dbReference>
<dbReference type="InterPro" id="IPR012779">
    <property type="entry name" value="Peptidase_M1_pepN"/>
</dbReference>
<dbReference type="InterPro" id="IPR024601">
    <property type="entry name" value="Peptidase_M1_pepN_C"/>
</dbReference>
<dbReference type="InterPro" id="IPR037144">
    <property type="entry name" value="Peptidase_M1_pepN_C_sf"/>
</dbReference>
<dbReference type="InterPro" id="IPR035414">
    <property type="entry name" value="Peptidase_M1_pepN_Ig-like"/>
</dbReference>
<dbReference type="InterPro" id="IPR027268">
    <property type="entry name" value="Peptidase_M4/M1_CTD_sf"/>
</dbReference>
<dbReference type="NCBIfam" id="TIGR02414">
    <property type="entry name" value="pepN_proteo"/>
    <property type="match status" value="1"/>
</dbReference>
<dbReference type="PANTHER" id="PTHR46322">
    <property type="entry name" value="PUROMYCIN-SENSITIVE AMINOPEPTIDASE"/>
    <property type="match status" value="1"/>
</dbReference>
<dbReference type="PANTHER" id="PTHR46322:SF1">
    <property type="entry name" value="PUROMYCIN-SENSITIVE AMINOPEPTIDASE"/>
    <property type="match status" value="1"/>
</dbReference>
<dbReference type="Pfam" id="PF11940">
    <property type="entry name" value="DUF3458"/>
    <property type="match status" value="1"/>
</dbReference>
<dbReference type="Pfam" id="PF17432">
    <property type="entry name" value="DUF3458_C"/>
    <property type="match status" value="1"/>
</dbReference>
<dbReference type="Pfam" id="PF01433">
    <property type="entry name" value="Peptidase_M1"/>
    <property type="match status" value="1"/>
</dbReference>
<dbReference type="Pfam" id="PF17900">
    <property type="entry name" value="Peptidase_M1_N"/>
    <property type="match status" value="1"/>
</dbReference>
<dbReference type="PRINTS" id="PR00756">
    <property type="entry name" value="ALADIPTASE"/>
</dbReference>
<dbReference type="SUPFAM" id="SSF63737">
    <property type="entry name" value="Leukotriene A4 hydrolase N-terminal domain"/>
    <property type="match status" value="1"/>
</dbReference>
<dbReference type="SUPFAM" id="SSF55486">
    <property type="entry name" value="Metalloproteases ('zincins'), catalytic domain"/>
    <property type="match status" value="1"/>
</dbReference>
<dbReference type="PROSITE" id="PS00142">
    <property type="entry name" value="ZINC_PROTEASE"/>
    <property type="match status" value="1"/>
</dbReference>
<keyword id="KW-0031">Aminopeptidase</keyword>
<keyword id="KW-0997">Cell inner membrane</keyword>
<keyword id="KW-1003">Cell membrane</keyword>
<keyword id="KW-0378">Hydrolase</keyword>
<keyword id="KW-0472">Membrane</keyword>
<keyword id="KW-0479">Metal-binding</keyword>
<keyword id="KW-0482">Metalloprotease</keyword>
<keyword id="KW-0645">Protease</keyword>
<keyword id="KW-1185">Reference proteome</keyword>
<keyword id="KW-0862">Zinc</keyword>
<sequence>MLAKAKYRKDYKQPDFTVTDIYLDFQLDPKHTVVTAITKFQRLNNEATSLCLDGHSFQFSSIKFNGEPFSDYQQDGESLTLDLKDKSADEFEIEIVTFLVPAENTSLQGLYQSGEGICTQCEAEGFRQITYMLDRPDVLARYITKITADKTKYPFLLSNGNRIASGELEDGRHWVEWNDPFPKPSYLFALVAGDFDLLQDKFITKSGREVALELYVDRGNLNRATWAMESLKKAMKWDEDRFNLEYDLDIYMIVAVDFFNMGAMENKGLNIFNSKFVLANPQTATDDDYLAIESVIAHEYFHNWTGNRVTCRDWFQLSLKEGLTVFRDQEFSSDTGSRAVNRINNVKFLRTVQFAEDASPMSHPIRPEKVIEMNNFYTVTVYEKGAEVIRMLHTLLGEQGFQKGMQLYIAENDGKAATCEDFVSAMERANNLDLNQFRRWYSQSGTPELLISDAYDEKTHTYRLTVSQSTPPTADQMEKVNLHIPLKVALYDANGTKQMLQHNGELLSDVLNVTEKDQVFEFHGIYGRPIPALLCDFSAPVKLDYDYKTEQLLGLLKFADNQFIRWDAAQMLFAQELRRNVVRFQQGEALEISPEILTALSYVLNHYEKDIELATLILTLPKEMEFAESFKTIDPDGISAARAFMQAQIAESLKDDFLRVYTHIRLNDYQVTQQDIALRVMRNLCLTYLAYTNLGNNLVQKHYNNANNMTDTLAALSVATKAALLCRDVLLADFEQKWQHDGLVMDKWFALQATRPDDNVLEIIQLLMDHPSFNFNNPNRLRSLVGSFANHNLKAFHNVSGSGYRFLTDVLIRLNESNPQVAARLIEPLIRFSRFDAQRQTLMKRALERLSVVENLSKDLFEKIEKALQ</sequence>
<feature type="chain" id="PRO_0000095070" description="Aminopeptidase N">
    <location>
        <begin position="1"/>
        <end position="869"/>
    </location>
</feature>
<feature type="active site" description="Proton acceptor" evidence="2">
    <location>
        <position position="299"/>
    </location>
</feature>
<feature type="binding site" evidence="1">
    <location>
        <position position="122"/>
    </location>
    <ligand>
        <name>substrate</name>
    </ligand>
</feature>
<feature type="binding site" evidence="1">
    <location>
        <begin position="262"/>
        <end position="266"/>
    </location>
    <ligand>
        <name>substrate</name>
    </ligand>
</feature>
<feature type="binding site" evidence="2">
    <location>
        <position position="298"/>
    </location>
    <ligand>
        <name>Zn(2+)</name>
        <dbReference type="ChEBI" id="CHEBI:29105"/>
        <note>catalytic</note>
    </ligand>
</feature>
<feature type="binding site" evidence="2">
    <location>
        <position position="302"/>
    </location>
    <ligand>
        <name>Zn(2+)</name>
        <dbReference type="ChEBI" id="CHEBI:29105"/>
        <note>catalytic</note>
    </ligand>
</feature>
<feature type="binding site" evidence="2">
    <location>
        <position position="321"/>
    </location>
    <ligand>
        <name>Zn(2+)</name>
        <dbReference type="ChEBI" id="CHEBI:29105"/>
        <note>catalytic</note>
    </ligand>
</feature>
<feature type="site" description="Transition state stabilizer" evidence="1">
    <location>
        <position position="382"/>
    </location>
</feature>
<feature type="sequence conflict" description="In Ref. 2." evidence="3" ref="2">
    <original>Q</original>
    <variation>G</variation>
    <location>
        <position position="58"/>
    </location>
</feature>
<feature type="sequence conflict" description="In Ref. 2." evidence="3" ref="2">
    <original>I</original>
    <variation>L</variation>
    <location>
        <position position="93"/>
    </location>
</feature>
<feature type="sequence conflict" description="In Ref. 2." evidence="3" ref="2">
    <original>C</original>
    <variation>T</variation>
    <location>
        <position position="121"/>
    </location>
</feature>
<gene>
    <name type="primary">pepN</name>
    <name type="ordered locus">HI_1614</name>
</gene>
<evidence type="ECO:0000250" key="1"/>
<evidence type="ECO:0000255" key="2">
    <source>
        <dbReference type="PROSITE-ProRule" id="PRU10095"/>
    </source>
</evidence>
<evidence type="ECO:0000305" key="3"/>